<reference key="1">
    <citation type="journal article" date="2005" name="Genome Res.">
        <title>Coping with cold: the genome of the versatile marine Antarctica bacterium Pseudoalteromonas haloplanktis TAC125.</title>
        <authorList>
            <person name="Medigue C."/>
            <person name="Krin E."/>
            <person name="Pascal G."/>
            <person name="Barbe V."/>
            <person name="Bernsel A."/>
            <person name="Bertin P.N."/>
            <person name="Cheung F."/>
            <person name="Cruveiller S."/>
            <person name="D'Amico S."/>
            <person name="Duilio A."/>
            <person name="Fang G."/>
            <person name="Feller G."/>
            <person name="Ho C."/>
            <person name="Mangenot S."/>
            <person name="Marino G."/>
            <person name="Nilsson J."/>
            <person name="Parrilli E."/>
            <person name="Rocha E.P.C."/>
            <person name="Rouy Z."/>
            <person name="Sekowska A."/>
            <person name="Tutino M.L."/>
            <person name="Vallenet D."/>
            <person name="von Heijne G."/>
            <person name="Danchin A."/>
        </authorList>
    </citation>
    <scope>NUCLEOTIDE SEQUENCE [LARGE SCALE GENOMIC DNA]</scope>
    <source>
        <strain>TAC 125</strain>
    </source>
</reference>
<comment type="function">
    <text evidence="1">Interacts with the SecY protein in vivo. May bind preferentially to an uncomplexed state of SecY, thus functioning either as a chelating agent for excess SecY in the cell or as a regulatory factor that negatively controls the translocase function.</text>
</comment>
<comment type="subcellular location">
    <subcellularLocation>
        <location evidence="1">Cell inner membrane</location>
        <topology evidence="1">Peripheral membrane protein</topology>
        <orientation evidence="1">Cytoplasmic side</orientation>
    </subcellularLocation>
    <text evidence="1">Loosely associated with the cytoplasmic side of the inner membrane, probably via SecY.</text>
</comment>
<comment type="similarity">
    <text evidence="1">Belongs to the Syd family.</text>
</comment>
<sequence>MSVVLQLTQLHQRFNDKTLKNTQKHPLMVHDEQWPSPCEIGNVDQQGNIQWQAVLQQPAGSLNDLAKALDVTFPSGLNALYGHMYGGNIQASIDGHQVELLQVWNSDDFDLLQQNITGHVLMKRKLKQPETVFIGLTAQDDLLVCVLLHSGEVCLEYVGKKTHHVLAANIEEFLQALEV</sequence>
<protein>
    <recommendedName>
        <fullName evidence="1">Protein Syd</fullName>
    </recommendedName>
</protein>
<evidence type="ECO:0000255" key="1">
    <source>
        <dbReference type="HAMAP-Rule" id="MF_01104"/>
    </source>
</evidence>
<feature type="chain" id="PRO_0000298255" description="Protein Syd">
    <location>
        <begin position="1"/>
        <end position="179"/>
    </location>
</feature>
<accession>Q3IIT1</accession>
<gene>
    <name evidence="1" type="primary">syd</name>
    <name type="ordered locus">PSHAa1979</name>
</gene>
<proteinExistence type="inferred from homology"/>
<dbReference type="EMBL" id="CR954246">
    <property type="protein sequence ID" value="CAI87035.1"/>
    <property type="molecule type" value="Genomic_DNA"/>
</dbReference>
<dbReference type="SMR" id="Q3IIT1"/>
<dbReference type="STRING" id="326442.PSHAa1979"/>
<dbReference type="KEGG" id="pha:PSHAa1979"/>
<dbReference type="PATRIC" id="fig|326442.8.peg.1909"/>
<dbReference type="eggNOG" id="ENOG502ZCMR">
    <property type="taxonomic scope" value="Bacteria"/>
</dbReference>
<dbReference type="HOGENOM" id="CLU_121866_0_0_6"/>
<dbReference type="BioCyc" id="PHAL326442:PSHA_RS09790-MONOMER"/>
<dbReference type="Proteomes" id="UP000006843">
    <property type="component" value="Chromosome I"/>
</dbReference>
<dbReference type="GO" id="GO:0009898">
    <property type="term" value="C:cytoplasmic side of plasma membrane"/>
    <property type="evidence" value="ECO:0007669"/>
    <property type="project" value="InterPro"/>
</dbReference>
<dbReference type="CDD" id="cd16323">
    <property type="entry name" value="Syd"/>
    <property type="match status" value="1"/>
</dbReference>
<dbReference type="Gene3D" id="3.40.1580.20">
    <property type="entry name" value="Syd protein"/>
    <property type="match status" value="1"/>
</dbReference>
<dbReference type="HAMAP" id="MF_01104">
    <property type="entry name" value="Syd"/>
    <property type="match status" value="1"/>
</dbReference>
<dbReference type="InterPro" id="IPR009948">
    <property type="entry name" value="Syd"/>
</dbReference>
<dbReference type="InterPro" id="IPR038228">
    <property type="entry name" value="Syd_sf"/>
</dbReference>
<dbReference type="NCBIfam" id="NF003439">
    <property type="entry name" value="PRK04968.1"/>
    <property type="match status" value="1"/>
</dbReference>
<dbReference type="Pfam" id="PF07348">
    <property type="entry name" value="Syd"/>
    <property type="match status" value="1"/>
</dbReference>
<keyword id="KW-0997">Cell inner membrane</keyword>
<keyword id="KW-1003">Cell membrane</keyword>
<keyword id="KW-0472">Membrane</keyword>
<keyword id="KW-1185">Reference proteome</keyword>
<organism>
    <name type="scientific">Pseudoalteromonas translucida (strain TAC 125)</name>
    <dbReference type="NCBI Taxonomy" id="326442"/>
    <lineage>
        <taxon>Bacteria</taxon>
        <taxon>Pseudomonadati</taxon>
        <taxon>Pseudomonadota</taxon>
        <taxon>Gammaproteobacteria</taxon>
        <taxon>Alteromonadales</taxon>
        <taxon>Pseudoalteromonadaceae</taxon>
        <taxon>Pseudoalteromonas</taxon>
    </lineage>
</organism>
<name>SYDP_PSET1</name>